<keyword id="KW-0067">ATP-binding</keyword>
<keyword id="KW-0963">Cytoplasm</keyword>
<keyword id="KW-0418">Kinase</keyword>
<keyword id="KW-0460">Magnesium</keyword>
<keyword id="KW-0479">Metal-binding</keyword>
<keyword id="KW-0546">Nucleotide metabolism</keyword>
<keyword id="KW-0547">Nucleotide-binding</keyword>
<keyword id="KW-0597">Phosphoprotein</keyword>
<keyword id="KW-0808">Transferase</keyword>
<accession>A1V4K4</accession>
<protein>
    <recommendedName>
        <fullName evidence="1">Nucleoside diphosphate kinase</fullName>
        <shortName evidence="1">NDK</shortName>
        <shortName evidence="1">NDP kinase</shortName>
        <ecNumber evidence="1">2.7.4.6</ecNumber>
    </recommendedName>
    <alternativeName>
        <fullName evidence="1">Nucleoside-2-P kinase</fullName>
    </alternativeName>
</protein>
<dbReference type="EC" id="2.7.4.6" evidence="1"/>
<dbReference type="EMBL" id="CP000526">
    <property type="protein sequence ID" value="ABM52790.1"/>
    <property type="molecule type" value="Genomic_DNA"/>
</dbReference>
<dbReference type="RefSeq" id="WP_004193561.1">
    <property type="nucleotide sequence ID" value="NC_008785.1"/>
</dbReference>
<dbReference type="SMR" id="A1V4K4"/>
<dbReference type="GeneID" id="92979081"/>
<dbReference type="KEGG" id="bmv:BMASAVP1_A1838"/>
<dbReference type="HOGENOM" id="CLU_060216_8_1_4"/>
<dbReference type="GO" id="GO:0005737">
    <property type="term" value="C:cytoplasm"/>
    <property type="evidence" value="ECO:0007669"/>
    <property type="project" value="UniProtKB-SubCell"/>
</dbReference>
<dbReference type="GO" id="GO:0005524">
    <property type="term" value="F:ATP binding"/>
    <property type="evidence" value="ECO:0007669"/>
    <property type="project" value="UniProtKB-UniRule"/>
</dbReference>
<dbReference type="GO" id="GO:0046872">
    <property type="term" value="F:metal ion binding"/>
    <property type="evidence" value="ECO:0007669"/>
    <property type="project" value="UniProtKB-KW"/>
</dbReference>
<dbReference type="GO" id="GO:0004550">
    <property type="term" value="F:nucleoside diphosphate kinase activity"/>
    <property type="evidence" value="ECO:0007669"/>
    <property type="project" value="UniProtKB-UniRule"/>
</dbReference>
<dbReference type="GO" id="GO:0006241">
    <property type="term" value="P:CTP biosynthetic process"/>
    <property type="evidence" value="ECO:0007669"/>
    <property type="project" value="UniProtKB-UniRule"/>
</dbReference>
<dbReference type="GO" id="GO:0006183">
    <property type="term" value="P:GTP biosynthetic process"/>
    <property type="evidence" value="ECO:0007669"/>
    <property type="project" value="UniProtKB-UniRule"/>
</dbReference>
<dbReference type="GO" id="GO:0006228">
    <property type="term" value="P:UTP biosynthetic process"/>
    <property type="evidence" value="ECO:0007669"/>
    <property type="project" value="UniProtKB-UniRule"/>
</dbReference>
<dbReference type="CDD" id="cd04413">
    <property type="entry name" value="NDPk_I"/>
    <property type="match status" value="1"/>
</dbReference>
<dbReference type="FunFam" id="3.30.70.141:FF:000001">
    <property type="entry name" value="Nucleoside diphosphate kinase"/>
    <property type="match status" value="1"/>
</dbReference>
<dbReference type="Gene3D" id="3.30.70.141">
    <property type="entry name" value="Nucleoside diphosphate kinase-like domain"/>
    <property type="match status" value="1"/>
</dbReference>
<dbReference type="HAMAP" id="MF_00451">
    <property type="entry name" value="NDP_kinase"/>
    <property type="match status" value="1"/>
</dbReference>
<dbReference type="InterPro" id="IPR034907">
    <property type="entry name" value="NDK-like_dom"/>
</dbReference>
<dbReference type="InterPro" id="IPR036850">
    <property type="entry name" value="NDK-like_dom_sf"/>
</dbReference>
<dbReference type="InterPro" id="IPR001564">
    <property type="entry name" value="Nucleoside_diP_kinase"/>
</dbReference>
<dbReference type="InterPro" id="IPR023005">
    <property type="entry name" value="Nucleoside_diP_kinase_AS"/>
</dbReference>
<dbReference type="NCBIfam" id="NF001908">
    <property type="entry name" value="PRK00668.1"/>
    <property type="match status" value="1"/>
</dbReference>
<dbReference type="PANTHER" id="PTHR46161">
    <property type="entry name" value="NUCLEOSIDE DIPHOSPHATE KINASE"/>
    <property type="match status" value="1"/>
</dbReference>
<dbReference type="PANTHER" id="PTHR46161:SF3">
    <property type="entry name" value="NUCLEOSIDE DIPHOSPHATE KINASE DDB_G0292928-RELATED"/>
    <property type="match status" value="1"/>
</dbReference>
<dbReference type="Pfam" id="PF00334">
    <property type="entry name" value="NDK"/>
    <property type="match status" value="1"/>
</dbReference>
<dbReference type="PRINTS" id="PR01243">
    <property type="entry name" value="NUCDPKINASE"/>
</dbReference>
<dbReference type="SMART" id="SM00562">
    <property type="entry name" value="NDK"/>
    <property type="match status" value="1"/>
</dbReference>
<dbReference type="SUPFAM" id="SSF54919">
    <property type="entry name" value="Nucleoside diphosphate kinase, NDK"/>
    <property type="match status" value="1"/>
</dbReference>
<dbReference type="PROSITE" id="PS00469">
    <property type="entry name" value="NDPK"/>
    <property type="match status" value="1"/>
</dbReference>
<dbReference type="PROSITE" id="PS51374">
    <property type="entry name" value="NDPK_LIKE"/>
    <property type="match status" value="1"/>
</dbReference>
<name>NDK_BURMS</name>
<comment type="function">
    <text evidence="1">Major role in the synthesis of nucleoside triphosphates other than ATP. The ATP gamma phosphate is transferred to the NDP beta phosphate via a ping-pong mechanism, using a phosphorylated active-site intermediate.</text>
</comment>
<comment type="catalytic activity">
    <reaction evidence="1">
        <text>a 2'-deoxyribonucleoside 5'-diphosphate + ATP = a 2'-deoxyribonucleoside 5'-triphosphate + ADP</text>
        <dbReference type="Rhea" id="RHEA:44640"/>
        <dbReference type="ChEBI" id="CHEBI:30616"/>
        <dbReference type="ChEBI" id="CHEBI:61560"/>
        <dbReference type="ChEBI" id="CHEBI:73316"/>
        <dbReference type="ChEBI" id="CHEBI:456216"/>
        <dbReference type="EC" id="2.7.4.6"/>
    </reaction>
</comment>
<comment type="catalytic activity">
    <reaction evidence="1">
        <text>a ribonucleoside 5'-diphosphate + ATP = a ribonucleoside 5'-triphosphate + ADP</text>
        <dbReference type="Rhea" id="RHEA:18113"/>
        <dbReference type="ChEBI" id="CHEBI:30616"/>
        <dbReference type="ChEBI" id="CHEBI:57930"/>
        <dbReference type="ChEBI" id="CHEBI:61557"/>
        <dbReference type="ChEBI" id="CHEBI:456216"/>
        <dbReference type="EC" id="2.7.4.6"/>
    </reaction>
</comment>
<comment type="cofactor">
    <cofactor evidence="1">
        <name>Mg(2+)</name>
        <dbReference type="ChEBI" id="CHEBI:18420"/>
    </cofactor>
</comment>
<comment type="subunit">
    <text evidence="1">Homotetramer.</text>
</comment>
<comment type="subcellular location">
    <subcellularLocation>
        <location evidence="1">Cytoplasm</location>
    </subcellularLocation>
</comment>
<comment type="similarity">
    <text evidence="1">Belongs to the NDK family.</text>
</comment>
<evidence type="ECO:0000255" key="1">
    <source>
        <dbReference type="HAMAP-Rule" id="MF_00451"/>
    </source>
</evidence>
<organism>
    <name type="scientific">Burkholderia mallei (strain SAVP1)</name>
    <dbReference type="NCBI Taxonomy" id="320388"/>
    <lineage>
        <taxon>Bacteria</taxon>
        <taxon>Pseudomonadati</taxon>
        <taxon>Pseudomonadota</taxon>
        <taxon>Betaproteobacteria</taxon>
        <taxon>Burkholderiales</taxon>
        <taxon>Burkholderiaceae</taxon>
        <taxon>Burkholderia</taxon>
        <taxon>pseudomallei group</taxon>
    </lineage>
</organism>
<gene>
    <name evidence="1" type="primary">ndk</name>
    <name type="ordered locus">BMASAVP1_A1838</name>
</gene>
<reference key="1">
    <citation type="journal article" date="2010" name="Genome Biol. Evol.">
        <title>Continuing evolution of Burkholderia mallei through genome reduction and large-scale rearrangements.</title>
        <authorList>
            <person name="Losada L."/>
            <person name="Ronning C.M."/>
            <person name="DeShazer D."/>
            <person name="Woods D."/>
            <person name="Fedorova N."/>
            <person name="Kim H.S."/>
            <person name="Shabalina S.A."/>
            <person name="Pearson T.R."/>
            <person name="Brinkac L."/>
            <person name="Tan P."/>
            <person name="Nandi T."/>
            <person name="Crabtree J."/>
            <person name="Badger J."/>
            <person name="Beckstrom-Sternberg S."/>
            <person name="Saqib M."/>
            <person name="Schutzer S.E."/>
            <person name="Keim P."/>
            <person name="Nierman W.C."/>
        </authorList>
    </citation>
    <scope>NUCLEOTIDE SEQUENCE [LARGE SCALE GENOMIC DNA]</scope>
    <source>
        <strain>SAVP1</strain>
    </source>
</reference>
<proteinExistence type="inferred from homology"/>
<feature type="chain" id="PRO_1000026216" description="Nucleoside diphosphate kinase">
    <location>
        <begin position="1"/>
        <end position="141"/>
    </location>
</feature>
<feature type="active site" description="Pros-phosphohistidine intermediate" evidence="1">
    <location>
        <position position="117"/>
    </location>
</feature>
<feature type="binding site" evidence="1">
    <location>
        <position position="11"/>
    </location>
    <ligand>
        <name>ATP</name>
        <dbReference type="ChEBI" id="CHEBI:30616"/>
    </ligand>
</feature>
<feature type="binding site" evidence="1">
    <location>
        <position position="59"/>
    </location>
    <ligand>
        <name>ATP</name>
        <dbReference type="ChEBI" id="CHEBI:30616"/>
    </ligand>
</feature>
<feature type="binding site" evidence="1">
    <location>
        <position position="87"/>
    </location>
    <ligand>
        <name>ATP</name>
        <dbReference type="ChEBI" id="CHEBI:30616"/>
    </ligand>
</feature>
<feature type="binding site" evidence="1">
    <location>
        <position position="93"/>
    </location>
    <ligand>
        <name>ATP</name>
        <dbReference type="ChEBI" id="CHEBI:30616"/>
    </ligand>
</feature>
<feature type="binding site" evidence="1">
    <location>
        <position position="104"/>
    </location>
    <ligand>
        <name>ATP</name>
        <dbReference type="ChEBI" id="CHEBI:30616"/>
    </ligand>
</feature>
<feature type="binding site" evidence="1">
    <location>
        <position position="114"/>
    </location>
    <ligand>
        <name>ATP</name>
        <dbReference type="ChEBI" id="CHEBI:30616"/>
    </ligand>
</feature>
<sequence>MALERTLSIIKPDAVAKNVIGQIYSRFENAGLKIVAARMAHLSRADAEKFYAVHAERPFFKDLVDFMISGPVMIQVLEGEDAILKNRDLMGATDPKKAEKGTIRADFADSIDANAVHGSDAPETARAEVAFFFPEMNVYSR</sequence>